<feature type="chain" id="PRO_0000210489" description="Uncharacterized protein MG255">
    <location>
        <begin position="1"/>
        <end position="365"/>
    </location>
</feature>
<feature type="transmembrane region" description="Helical" evidence="1">
    <location>
        <begin position="105"/>
        <end position="125"/>
    </location>
</feature>
<feature type="transmembrane region" description="Helical" evidence="1">
    <location>
        <begin position="151"/>
        <end position="171"/>
    </location>
</feature>
<feature type="transmembrane region" description="Helical" evidence="1">
    <location>
        <begin position="187"/>
        <end position="207"/>
    </location>
</feature>
<feature type="sequence conflict" description="In Ref. 2; AAD12457." evidence="2" ref="2">
    <original>N</original>
    <variation>KR</variation>
    <location>
        <position position="180"/>
    </location>
</feature>
<protein>
    <recommendedName>
        <fullName>Uncharacterized protein MG255</fullName>
    </recommendedName>
</protein>
<dbReference type="EMBL" id="L43967">
    <property type="protein sequence ID" value="AAC71475.1"/>
    <property type="molecule type" value="Genomic_DNA"/>
</dbReference>
<dbReference type="EMBL" id="U02174">
    <property type="protein sequence ID" value="AAD12457.1"/>
    <property type="molecule type" value="Genomic_DNA"/>
</dbReference>
<dbReference type="EMBL" id="U02164">
    <property type="protein sequence ID" value="AAD12446.1"/>
    <property type="molecule type" value="Genomic_DNA"/>
</dbReference>
<dbReference type="PIR" id="B64228">
    <property type="entry name" value="B64228"/>
</dbReference>
<dbReference type="RefSeq" id="WP_010869396.1">
    <property type="nucleotide sequence ID" value="NC_000908.2"/>
</dbReference>
<dbReference type="STRING" id="243273.MG_255"/>
<dbReference type="GeneID" id="88282402"/>
<dbReference type="KEGG" id="mge:MG_255"/>
<dbReference type="HOGENOM" id="CLU_038250_0_0_14"/>
<dbReference type="InParanoid" id="P47497"/>
<dbReference type="Proteomes" id="UP000000807">
    <property type="component" value="Chromosome"/>
</dbReference>
<dbReference type="GO" id="GO:0005886">
    <property type="term" value="C:plasma membrane"/>
    <property type="evidence" value="ECO:0007669"/>
    <property type="project" value="UniProtKB-SubCell"/>
</dbReference>
<name>Y255_MYCGE</name>
<proteinExistence type="predicted"/>
<sequence>MESENQIAILDYIFNQVNQPNQPKIVWFSGEGEDEKINFLIRLNDFFKPKFVENTNDSSFLLSFRNHVETKNSTPLTQANFANIANKLLAVLFGSLQWKQLNKPTGNWFLVILFLALLWLRQCWLKLQLTKISKFVNQKGILSFIKQQWPILTTLVTVGTTLGTPVFSLTIAQQDGIKQNAGNDVFIFLIIFSVFSISLGLVSSLIFLVSSLFSIRQKKTLDALDKVLSKFIDKYFFLDEKEIKKQLKYQFKNNGVCFFYGFDFDQAEFLEQSMNLMLLLKQTNCFILVGCKESEMTLIKNKIEPNINLKQNSFYLDLSNEISQVEQISKFNLLFRQLRLSSELFYLEDFFDYLTTAKQIVNFLF</sequence>
<keyword id="KW-1003">Cell membrane</keyword>
<keyword id="KW-0472">Membrane</keyword>
<keyword id="KW-1185">Reference proteome</keyword>
<keyword id="KW-0812">Transmembrane</keyword>
<keyword id="KW-1133">Transmembrane helix</keyword>
<comment type="subcellular location">
    <subcellularLocation>
        <location evidence="2">Cell membrane</location>
        <topology evidence="2">Multi-pass membrane protein</topology>
    </subcellularLocation>
</comment>
<accession>P47497</accession>
<accession>Q49289</accession>
<accession>Q49297</accession>
<evidence type="ECO:0000255" key="1"/>
<evidence type="ECO:0000305" key="2"/>
<organism>
    <name type="scientific">Mycoplasma genitalium (strain ATCC 33530 / DSM 19775 / NCTC 10195 / G37)</name>
    <name type="common">Mycoplasmoides genitalium</name>
    <dbReference type="NCBI Taxonomy" id="243273"/>
    <lineage>
        <taxon>Bacteria</taxon>
        <taxon>Bacillati</taxon>
        <taxon>Mycoplasmatota</taxon>
        <taxon>Mycoplasmoidales</taxon>
        <taxon>Mycoplasmoidaceae</taxon>
        <taxon>Mycoplasmoides</taxon>
    </lineage>
</organism>
<gene>
    <name type="ordered locus">MG255</name>
</gene>
<reference key="1">
    <citation type="journal article" date="1995" name="Science">
        <title>The minimal gene complement of Mycoplasma genitalium.</title>
        <authorList>
            <person name="Fraser C.M."/>
            <person name="Gocayne J.D."/>
            <person name="White O."/>
            <person name="Adams M.D."/>
            <person name="Clayton R.A."/>
            <person name="Fleischmann R.D."/>
            <person name="Bult C.J."/>
            <person name="Kerlavage A.R."/>
            <person name="Sutton G.G."/>
            <person name="Kelley J.M."/>
            <person name="Fritchman J.L."/>
            <person name="Weidman J.F."/>
            <person name="Small K.V."/>
            <person name="Sandusky M."/>
            <person name="Fuhrmann J.L."/>
            <person name="Nguyen D.T."/>
            <person name="Utterback T.R."/>
            <person name="Saudek D.M."/>
            <person name="Phillips C.A."/>
            <person name="Merrick J.M."/>
            <person name="Tomb J.-F."/>
            <person name="Dougherty B.A."/>
            <person name="Bott K.F."/>
            <person name="Hu P.-C."/>
            <person name="Lucier T.S."/>
            <person name="Peterson S.N."/>
            <person name="Smith H.O."/>
            <person name="Hutchison C.A. III"/>
            <person name="Venter J.C."/>
        </authorList>
    </citation>
    <scope>NUCLEOTIDE SEQUENCE [LARGE SCALE GENOMIC DNA]</scope>
    <source>
        <strain>ATCC 33530 / DSM 19775 / NCTC 10195 / G37</strain>
    </source>
</reference>
<reference key="2">
    <citation type="journal article" date="1993" name="J. Bacteriol.">
        <title>A survey of the Mycoplasma genitalium genome by using random sequencing.</title>
        <authorList>
            <person name="Peterson S.N."/>
            <person name="Hu P.-C."/>
            <person name="Bott K.F."/>
            <person name="Hutchison C.A. III"/>
        </authorList>
    </citation>
    <scope>NUCLEOTIDE SEQUENCE [GENOMIC DNA] OF 134-365</scope>
    <source>
        <strain>ATCC 33530 / DSM 19775 / NCTC 10195 / G37</strain>
    </source>
</reference>